<protein>
    <recommendedName>
        <fullName evidence="1">Small ribosomal subunit protein uS5</fullName>
    </recommendedName>
    <alternativeName>
        <fullName evidence="2">30S ribosomal protein S5</fullName>
    </alternativeName>
</protein>
<reference key="1">
    <citation type="journal article" date="2009" name="J. Bacteriol.">
        <title>Genome sequence of Azotobacter vinelandii, an obligate aerobe specialized to support diverse anaerobic metabolic processes.</title>
        <authorList>
            <person name="Setubal J.C."/>
            <person name="Dos Santos P."/>
            <person name="Goldman B.S."/>
            <person name="Ertesvaag H."/>
            <person name="Espin G."/>
            <person name="Rubio L.M."/>
            <person name="Valla S."/>
            <person name="Almeida N.F."/>
            <person name="Balasubramanian D."/>
            <person name="Cromes L."/>
            <person name="Curatti L."/>
            <person name="Du Z."/>
            <person name="Godsy E."/>
            <person name="Goodner B."/>
            <person name="Hellner-Burris K."/>
            <person name="Hernandez J.A."/>
            <person name="Houmiel K."/>
            <person name="Imperial J."/>
            <person name="Kennedy C."/>
            <person name="Larson T.J."/>
            <person name="Latreille P."/>
            <person name="Ligon L.S."/>
            <person name="Lu J."/>
            <person name="Maerk M."/>
            <person name="Miller N.M."/>
            <person name="Norton S."/>
            <person name="O'Carroll I.P."/>
            <person name="Paulsen I."/>
            <person name="Raulfs E.C."/>
            <person name="Roemer R."/>
            <person name="Rosser J."/>
            <person name="Segura D."/>
            <person name="Slater S."/>
            <person name="Stricklin S.L."/>
            <person name="Studholme D.J."/>
            <person name="Sun J."/>
            <person name="Viana C.J."/>
            <person name="Wallin E."/>
            <person name="Wang B."/>
            <person name="Wheeler C."/>
            <person name="Zhu H."/>
            <person name="Dean D.R."/>
            <person name="Dixon R."/>
            <person name="Wood D."/>
        </authorList>
    </citation>
    <scope>NUCLEOTIDE SEQUENCE [LARGE SCALE GENOMIC DNA]</scope>
    <source>
        <strain>DJ / ATCC BAA-1303</strain>
    </source>
</reference>
<feature type="chain" id="PRO_1000214314" description="Small ribosomal subunit protein uS5">
    <location>
        <begin position="1"/>
        <end position="166"/>
    </location>
</feature>
<feature type="domain" description="S5 DRBM" evidence="1">
    <location>
        <begin position="12"/>
        <end position="75"/>
    </location>
</feature>
<proteinExistence type="inferred from homology"/>
<comment type="function">
    <text evidence="1">With S4 and S12 plays an important role in translational accuracy.</text>
</comment>
<comment type="function">
    <text evidence="1">Located at the back of the 30S subunit body where it stabilizes the conformation of the head with respect to the body.</text>
</comment>
<comment type="subunit">
    <text evidence="1">Part of the 30S ribosomal subunit. Contacts proteins S4 and S8.</text>
</comment>
<comment type="domain">
    <text>The N-terminal domain interacts with the head of the 30S subunit; the C-terminal domain interacts with the body and contacts protein S4. The interaction surface between S4 and S5 is involved in control of translational fidelity.</text>
</comment>
<comment type="similarity">
    <text evidence="1">Belongs to the universal ribosomal protein uS5 family.</text>
</comment>
<evidence type="ECO:0000255" key="1">
    <source>
        <dbReference type="HAMAP-Rule" id="MF_01307"/>
    </source>
</evidence>
<evidence type="ECO:0000305" key="2"/>
<organism>
    <name type="scientific">Azotobacter vinelandii (strain DJ / ATCC BAA-1303)</name>
    <dbReference type="NCBI Taxonomy" id="322710"/>
    <lineage>
        <taxon>Bacteria</taxon>
        <taxon>Pseudomonadati</taxon>
        <taxon>Pseudomonadota</taxon>
        <taxon>Gammaproteobacteria</taxon>
        <taxon>Pseudomonadales</taxon>
        <taxon>Pseudomonadaceae</taxon>
        <taxon>Azotobacter</taxon>
    </lineage>
</organism>
<name>RS5_AZOVD</name>
<accession>C1DKN0</accession>
<dbReference type="EMBL" id="CP001157">
    <property type="protein sequence ID" value="ACO76893.1"/>
    <property type="molecule type" value="Genomic_DNA"/>
</dbReference>
<dbReference type="RefSeq" id="WP_012699319.1">
    <property type="nucleotide sequence ID" value="NC_012560.1"/>
</dbReference>
<dbReference type="SMR" id="C1DKN0"/>
<dbReference type="STRING" id="322710.Avin_06420"/>
<dbReference type="EnsemblBacteria" id="ACO76893">
    <property type="protein sequence ID" value="ACO76893"/>
    <property type="gene ID" value="Avin_06420"/>
</dbReference>
<dbReference type="GeneID" id="88184053"/>
<dbReference type="KEGG" id="avn:Avin_06420"/>
<dbReference type="eggNOG" id="COG0098">
    <property type="taxonomic scope" value="Bacteria"/>
</dbReference>
<dbReference type="HOGENOM" id="CLU_065898_2_2_6"/>
<dbReference type="OrthoDB" id="9809045at2"/>
<dbReference type="Proteomes" id="UP000002424">
    <property type="component" value="Chromosome"/>
</dbReference>
<dbReference type="GO" id="GO:0015935">
    <property type="term" value="C:small ribosomal subunit"/>
    <property type="evidence" value="ECO:0007669"/>
    <property type="project" value="InterPro"/>
</dbReference>
<dbReference type="GO" id="GO:0019843">
    <property type="term" value="F:rRNA binding"/>
    <property type="evidence" value="ECO:0007669"/>
    <property type="project" value="UniProtKB-UniRule"/>
</dbReference>
<dbReference type="GO" id="GO:0003735">
    <property type="term" value="F:structural constituent of ribosome"/>
    <property type="evidence" value="ECO:0007669"/>
    <property type="project" value="InterPro"/>
</dbReference>
<dbReference type="GO" id="GO:0006412">
    <property type="term" value="P:translation"/>
    <property type="evidence" value="ECO:0007669"/>
    <property type="project" value="UniProtKB-UniRule"/>
</dbReference>
<dbReference type="FunFam" id="3.30.160.20:FF:000001">
    <property type="entry name" value="30S ribosomal protein S5"/>
    <property type="match status" value="1"/>
</dbReference>
<dbReference type="FunFam" id="3.30.230.10:FF:000002">
    <property type="entry name" value="30S ribosomal protein S5"/>
    <property type="match status" value="1"/>
</dbReference>
<dbReference type="Gene3D" id="3.30.160.20">
    <property type="match status" value="1"/>
</dbReference>
<dbReference type="Gene3D" id="3.30.230.10">
    <property type="match status" value="1"/>
</dbReference>
<dbReference type="HAMAP" id="MF_01307_B">
    <property type="entry name" value="Ribosomal_uS5_B"/>
    <property type="match status" value="1"/>
</dbReference>
<dbReference type="InterPro" id="IPR020568">
    <property type="entry name" value="Ribosomal_Su5_D2-typ_SF"/>
</dbReference>
<dbReference type="InterPro" id="IPR000851">
    <property type="entry name" value="Ribosomal_uS5"/>
</dbReference>
<dbReference type="InterPro" id="IPR005712">
    <property type="entry name" value="Ribosomal_uS5_bac-type"/>
</dbReference>
<dbReference type="InterPro" id="IPR005324">
    <property type="entry name" value="Ribosomal_uS5_C"/>
</dbReference>
<dbReference type="InterPro" id="IPR013810">
    <property type="entry name" value="Ribosomal_uS5_N"/>
</dbReference>
<dbReference type="InterPro" id="IPR018192">
    <property type="entry name" value="Ribosomal_uS5_N_CS"/>
</dbReference>
<dbReference type="InterPro" id="IPR014721">
    <property type="entry name" value="Ribsml_uS5_D2-typ_fold_subgr"/>
</dbReference>
<dbReference type="NCBIfam" id="TIGR01021">
    <property type="entry name" value="rpsE_bact"/>
    <property type="match status" value="1"/>
</dbReference>
<dbReference type="PANTHER" id="PTHR48432">
    <property type="entry name" value="S5 DRBM DOMAIN-CONTAINING PROTEIN"/>
    <property type="match status" value="1"/>
</dbReference>
<dbReference type="PANTHER" id="PTHR48432:SF1">
    <property type="entry name" value="S5 DRBM DOMAIN-CONTAINING PROTEIN"/>
    <property type="match status" value="1"/>
</dbReference>
<dbReference type="Pfam" id="PF00333">
    <property type="entry name" value="Ribosomal_S5"/>
    <property type="match status" value="1"/>
</dbReference>
<dbReference type="Pfam" id="PF03719">
    <property type="entry name" value="Ribosomal_S5_C"/>
    <property type="match status" value="1"/>
</dbReference>
<dbReference type="SUPFAM" id="SSF54768">
    <property type="entry name" value="dsRNA-binding domain-like"/>
    <property type="match status" value="1"/>
</dbReference>
<dbReference type="SUPFAM" id="SSF54211">
    <property type="entry name" value="Ribosomal protein S5 domain 2-like"/>
    <property type="match status" value="1"/>
</dbReference>
<dbReference type="PROSITE" id="PS00585">
    <property type="entry name" value="RIBOSOMAL_S5"/>
    <property type="match status" value="1"/>
</dbReference>
<dbReference type="PROSITE" id="PS50881">
    <property type="entry name" value="S5_DSRBD"/>
    <property type="match status" value="1"/>
</dbReference>
<gene>
    <name evidence="1" type="primary">rpsE</name>
    <name type="ordered locus">Avin_06420</name>
</gene>
<keyword id="KW-0687">Ribonucleoprotein</keyword>
<keyword id="KW-0689">Ribosomal protein</keyword>
<keyword id="KW-0694">RNA-binding</keyword>
<keyword id="KW-0699">rRNA-binding</keyword>
<sequence length="166" mass="17717">MANNEQKRDEGYIEKLVQVNRVAKTVKGGRIFTFTALTVVGDGKGRVGFGRGKSREVPAAIQKAMEAARRNMIQVDLSGTTLQYPVKSAHGASRVYMQPASEGTGIIAGGAMRAVLEVAGVQNVLAKCYGSTNPVNVVYATFKGLKEMQSPESVAAKRGKSVEEIL</sequence>